<name>Y2365_STAAC</name>
<keyword id="KW-1003">Cell membrane</keyword>
<keyword id="KW-0449">Lipoprotein</keyword>
<keyword id="KW-0472">Membrane</keyword>
<keyword id="KW-0564">Palmitate</keyword>
<keyword id="KW-0732">Signal</keyword>
<protein>
    <recommendedName>
        <fullName>Uncharacterized lipoprotein SACOL2365</fullName>
    </recommendedName>
</protein>
<feature type="signal peptide" evidence="1">
    <location>
        <begin position="1"/>
        <end position="17"/>
    </location>
</feature>
<feature type="chain" id="PRO_0000296175" description="Uncharacterized lipoprotein SACOL2365">
    <location>
        <begin position="18"/>
        <end position="209"/>
    </location>
</feature>
<feature type="region of interest" description="Disordered" evidence="2">
    <location>
        <begin position="17"/>
        <end position="105"/>
    </location>
</feature>
<feature type="compositionally biased region" description="Basic and acidic residues" evidence="2">
    <location>
        <begin position="23"/>
        <end position="70"/>
    </location>
</feature>
<feature type="compositionally biased region" description="Low complexity" evidence="2">
    <location>
        <begin position="71"/>
        <end position="105"/>
    </location>
</feature>
<feature type="lipid moiety-binding region" description="N-palmitoyl cysteine" evidence="1">
    <location>
        <position position="18"/>
    </location>
</feature>
<feature type="lipid moiety-binding region" description="S-diacylglycerol cysteine" evidence="1">
    <location>
        <position position="18"/>
    </location>
</feature>
<reference key="1">
    <citation type="journal article" date="2005" name="J. Bacteriol.">
        <title>Insights on evolution of virulence and resistance from the complete genome analysis of an early methicillin-resistant Staphylococcus aureus strain and a biofilm-producing methicillin-resistant Staphylococcus epidermidis strain.</title>
        <authorList>
            <person name="Gill S.R."/>
            <person name="Fouts D.E."/>
            <person name="Archer G.L."/>
            <person name="Mongodin E.F."/>
            <person name="DeBoy R.T."/>
            <person name="Ravel J."/>
            <person name="Paulsen I.T."/>
            <person name="Kolonay J.F."/>
            <person name="Brinkac L.M."/>
            <person name="Beanan M.J."/>
            <person name="Dodson R.J."/>
            <person name="Daugherty S.C."/>
            <person name="Madupu R."/>
            <person name="Angiuoli S.V."/>
            <person name="Durkin A.S."/>
            <person name="Haft D.H."/>
            <person name="Vamathevan J.J."/>
            <person name="Khouri H."/>
            <person name="Utterback T.R."/>
            <person name="Lee C."/>
            <person name="Dimitrov G."/>
            <person name="Jiang L."/>
            <person name="Qin H."/>
            <person name="Weidman J."/>
            <person name="Tran K."/>
            <person name="Kang K.H."/>
            <person name="Hance I.R."/>
            <person name="Nelson K.E."/>
            <person name="Fraser C.M."/>
        </authorList>
    </citation>
    <scope>NUCLEOTIDE SEQUENCE [LARGE SCALE GENOMIC DNA]</scope>
    <source>
        <strain>COL</strain>
    </source>
</reference>
<sequence length="209" mass="23362">MKRLVTGLLALSLFLAACGQDSDQQKDGNKEKDDKAKTEQQDKKTNDSSKDKKDNKDDSKDVNKDNKDNSANDNQQQSNSNATNNDQNQTNNNQSSNNQANNNQKSSYVAPYYGQNAAPVARQIYPFNGNKNQALQQLPNFQTALNAANNEANKFGSNNKVYNDYSIEEHNGNYKYVFSFKDPNANGKYSIVTVDYTGQAMVTDPNYQQ</sequence>
<accession>Q5HDI7</accession>
<organism>
    <name type="scientific">Staphylococcus aureus (strain COL)</name>
    <dbReference type="NCBI Taxonomy" id="93062"/>
    <lineage>
        <taxon>Bacteria</taxon>
        <taxon>Bacillati</taxon>
        <taxon>Bacillota</taxon>
        <taxon>Bacilli</taxon>
        <taxon>Bacillales</taxon>
        <taxon>Staphylococcaceae</taxon>
        <taxon>Staphylococcus</taxon>
    </lineage>
</organism>
<gene>
    <name type="ordered locus">SACOL2365</name>
</gene>
<evidence type="ECO:0000255" key="1">
    <source>
        <dbReference type="PROSITE-ProRule" id="PRU00303"/>
    </source>
</evidence>
<evidence type="ECO:0000256" key="2">
    <source>
        <dbReference type="SAM" id="MobiDB-lite"/>
    </source>
</evidence>
<proteinExistence type="inferred from homology"/>
<comment type="subcellular location">
    <subcellularLocation>
        <location evidence="1">Cell membrane</location>
        <topology evidence="1">Lipid-anchor</topology>
    </subcellularLocation>
</comment>
<dbReference type="EMBL" id="CP000046">
    <property type="protein sequence ID" value="AAW37192.1"/>
    <property type="molecule type" value="Genomic_DNA"/>
</dbReference>
<dbReference type="RefSeq" id="WP_000827000.1">
    <property type="nucleotide sequence ID" value="NZ_JBGOFO010000004.1"/>
</dbReference>
<dbReference type="KEGG" id="sac:SACOL2365"/>
<dbReference type="HOGENOM" id="CLU_088585_0_0_9"/>
<dbReference type="Proteomes" id="UP000000530">
    <property type="component" value="Chromosome"/>
</dbReference>
<dbReference type="GO" id="GO:0005886">
    <property type="term" value="C:plasma membrane"/>
    <property type="evidence" value="ECO:0007669"/>
    <property type="project" value="UniProtKB-SubCell"/>
</dbReference>
<dbReference type="PROSITE" id="PS51257">
    <property type="entry name" value="PROKAR_LIPOPROTEIN"/>
    <property type="match status" value="1"/>
</dbReference>